<protein>
    <recommendedName>
        <fullName evidence="3">Short cationic peptide-6c</fullName>
        <shortName evidence="3">SCP-6c</shortName>
    </recommendedName>
    <alternativeName>
        <fullName evidence="2">Short cationic peptide-6i</fullName>
        <shortName evidence="2">SCP-6i</shortName>
    </alternativeName>
    <alternativeName>
        <fullName evidence="3">Truncated variant of Cupiennin 6 family</fullName>
    </alternativeName>
</protein>
<name>TXS6C_CUPSA</name>
<feature type="peptide" id="PRO_0000421232" description="Short cationic peptide-6c" evidence="1">
    <location>
        <begin position="1"/>
        <end position="13"/>
    </location>
</feature>
<sequence length="13" mass="1753">FLNPFRWVINKYR</sequence>
<evidence type="ECO:0000269" key="1">
    <source>
    </source>
</evidence>
<evidence type="ECO:0000303" key="2">
    <source>
    </source>
</evidence>
<evidence type="ECO:0000303" key="3">
    <source ref="2"/>
</evidence>
<evidence type="ECO:0000305" key="4"/>
<evidence type="ECO:0000305" key="5">
    <source>
    </source>
</evidence>
<comment type="subcellular location">
    <subcellularLocation>
        <location evidence="1">Secreted</location>
    </subcellularLocation>
</comment>
<comment type="tissue specificity">
    <text evidence="5">Expressed by the venom gland.</text>
</comment>
<comment type="mass spectrometry" mass="2798.479" method="Electrospray" evidence="1"/>
<comment type="similarity">
    <text evidence="4">Belongs to the cationic peptide 04 (cupiennin) family. 06 subfamily.</text>
</comment>
<proteinExistence type="evidence at protein level"/>
<dbReference type="GO" id="GO:0005576">
    <property type="term" value="C:extracellular region"/>
    <property type="evidence" value="ECO:0007669"/>
    <property type="project" value="UniProtKB-SubCell"/>
</dbReference>
<dbReference type="GO" id="GO:0090729">
    <property type="term" value="F:toxin activity"/>
    <property type="evidence" value="ECO:0007669"/>
    <property type="project" value="UniProtKB-KW"/>
</dbReference>
<reference key="1">
    <citation type="journal article" date="2012" name="FEBS J.">
        <title>Multicomponent venom of the spider Cupiennius salei: a bioanalytical investigation applying different strategies.</title>
        <authorList>
            <person name="Trachsel C."/>
            <person name="Siegemund D."/>
            <person name="Kampfer U."/>
            <person name="Kopp L.S."/>
            <person name="Buhr C."/>
            <person name="Grossmann J."/>
            <person name="Luthi C."/>
            <person name="Cunningham M."/>
            <person name="Nentwig W."/>
            <person name="Kuhn-Nentwig L."/>
            <person name="Schurch S."/>
            <person name="Schaller J."/>
        </authorList>
    </citation>
    <scope>PROTEIN SEQUENCE</scope>
    <scope>MASS SPECTROMETRY</scope>
    <source>
        <tissue>Venom</tissue>
    </source>
</reference>
<reference key="2">
    <citation type="unpublished observations" date="2015-06">
        <authorList>
            <person name="Kuhn-Nentwig L."/>
            <person name="Gohel T."/>
        </authorList>
    </citation>
    <scope>NOMENCLATURE</scope>
</reference>
<organism>
    <name type="scientific">Cupiennius salei</name>
    <name type="common">American wandering spider</name>
    <dbReference type="NCBI Taxonomy" id="6928"/>
    <lineage>
        <taxon>Eukaryota</taxon>
        <taxon>Metazoa</taxon>
        <taxon>Ecdysozoa</taxon>
        <taxon>Arthropoda</taxon>
        <taxon>Chelicerata</taxon>
        <taxon>Arachnida</taxon>
        <taxon>Araneae</taxon>
        <taxon>Araneomorphae</taxon>
        <taxon>Entelegynae</taxon>
        <taxon>Lycosoidea</taxon>
        <taxon>Ctenidae</taxon>
        <taxon>Cupiennius</taxon>
    </lineage>
</organism>
<accession>B3EWX3</accession>
<keyword id="KW-0903">Direct protein sequencing</keyword>
<keyword id="KW-0964">Secreted</keyword>
<keyword id="KW-0800">Toxin</keyword>